<feature type="signal peptide">
    <location>
        <begin position="1"/>
        <end position="19"/>
    </location>
</feature>
<feature type="chain" id="PRO_0000008562" description="Esterase P">
    <location>
        <begin position="20"/>
        <end position="544"/>
    </location>
</feature>
<feature type="active site" description="Acyl-ester intermediate" evidence="3">
    <location>
        <position position="206"/>
    </location>
</feature>
<feature type="active site" description="Charge relay system" evidence="1">
    <location>
        <position position="466"/>
    </location>
</feature>
<feature type="glycosylation site" description="N-linked (GlcNAc...) asparagine" evidence="2">
    <location>
        <position position="75"/>
    </location>
</feature>
<feature type="glycosylation site" description="N-linked (GlcNAc...) asparagine" evidence="2">
    <location>
        <position position="114"/>
    </location>
</feature>
<feature type="glycosylation site" description="N-linked (GlcNAc...) asparagine" evidence="2">
    <location>
        <position position="262"/>
    </location>
</feature>
<feature type="glycosylation site" description="N-linked (GlcNAc...) asparagine" evidence="2">
    <location>
        <position position="456"/>
    </location>
</feature>
<feature type="disulfide bond" evidence="1">
    <location>
        <begin position="83"/>
        <end position="102"/>
    </location>
</feature>
<feature type="disulfide bond" evidence="1">
    <location>
        <begin position="258"/>
        <end position="270"/>
    </location>
</feature>
<feature type="disulfide bond" evidence="2">
    <location>
        <begin position="514"/>
        <end position="535"/>
    </location>
</feature>
<feature type="sequence conflict" description="In Ref. 1; AAA28520." evidence="4" ref="1">
    <original>N</original>
    <variation>Y</variation>
    <location>
        <position position="50"/>
    </location>
</feature>
<feature type="sequence conflict" description="In Ref. 1; AAA28520." evidence="4" ref="1">
    <original>FG</original>
    <variation>YR</variation>
    <location>
        <begin position="155"/>
        <end position="156"/>
    </location>
</feature>
<feature type="sequence conflict" description="In Ref. 1; AAA28520." evidence="4" ref="1">
    <original>T</original>
    <variation>I</variation>
    <location>
        <position position="481"/>
    </location>
</feature>
<accession>P18167</accession>
<accession>Q32KD6</accession>
<accession>Q9VTV0</accession>
<name>ESTP_DROME</name>
<sequence>MSIFKRLLCLTLLWIAALESEADPLIVEITNGKIRGKDNGLYYSYESIPNAEHPTGALRFEAPQPYSHHWTDVFNATQSPVECMQWNQFINENNKLMGDEDCLTVSIYKPKKPNRSSFPVVVLLHGGAFMFGSGSIYGHDSIMREGTLLVVKISFGLGPLGFASTGDRHLPGNYGLKDQRLALQWIKKNIAHFGGMPDNIVLIGHSAGGASAHLQLLHEDFKHLAKGAISVSGNALDPWVIQQGGRRRAFELGRIVGCGHTNVSAELKDCLKSKPASDIVSAVRSFLVFSYVPFSAFGPVVEPSDAPDAFLTEDPRAVIKSGKFAQVPWAVTYTTEDGGYNAAQLLERNKLTGESWIDLLNDRWFDWAPYLLFYRDAKKTIKDMDDLSFDLRQQYLADRRFSVESYWNVQRMFTDVLFKNSVPSAIDLHRKYGKSPVYSFVYDNPTDSGVGQLLSNRTDVHFGTVHGDDFFLIFNTAAYRTGIRPDEEVISKKFIGMLEDFALNDKGTLTFGECNFQNNVNSKEYQVLRISRNACKNEEYARFP</sequence>
<comment type="catalytic activity">
    <reaction evidence="3">
        <text>a carboxylic ester + H2O = an alcohol + a carboxylate + H(+)</text>
        <dbReference type="Rhea" id="RHEA:21164"/>
        <dbReference type="ChEBI" id="CHEBI:15377"/>
        <dbReference type="ChEBI" id="CHEBI:15378"/>
        <dbReference type="ChEBI" id="CHEBI:29067"/>
        <dbReference type="ChEBI" id="CHEBI:30879"/>
        <dbReference type="ChEBI" id="CHEBI:33308"/>
        <dbReference type="EC" id="3.1.1.1"/>
    </reaction>
</comment>
<comment type="subunit">
    <text>Monomer.</text>
</comment>
<comment type="subcellular location">
    <subcellularLocation>
        <location>Secreted</location>
    </subcellularLocation>
</comment>
<comment type="developmental stage">
    <text>Mainly in late larvae.</text>
</comment>
<comment type="similarity">
    <text evidence="4">Belongs to the type-B carboxylesterase/lipase family.</text>
</comment>
<organism>
    <name type="scientific">Drosophila melanogaster</name>
    <name type="common">Fruit fly</name>
    <dbReference type="NCBI Taxonomy" id="7227"/>
    <lineage>
        <taxon>Eukaryota</taxon>
        <taxon>Metazoa</taxon>
        <taxon>Ecdysozoa</taxon>
        <taxon>Arthropoda</taxon>
        <taxon>Hexapoda</taxon>
        <taxon>Insecta</taxon>
        <taxon>Pterygota</taxon>
        <taxon>Neoptera</taxon>
        <taxon>Endopterygota</taxon>
        <taxon>Diptera</taxon>
        <taxon>Brachycera</taxon>
        <taxon>Muscomorpha</taxon>
        <taxon>Ephydroidea</taxon>
        <taxon>Drosophilidae</taxon>
        <taxon>Drosophila</taxon>
        <taxon>Sophophora</taxon>
    </lineage>
</organism>
<dbReference type="EC" id="3.1.1.1"/>
<dbReference type="EMBL" id="M33780">
    <property type="protein sequence ID" value="AAA28520.1"/>
    <property type="molecule type" value="Genomic_DNA"/>
</dbReference>
<dbReference type="EMBL" id="AE014296">
    <property type="protein sequence ID" value="AAF49945.1"/>
    <property type="molecule type" value="Genomic_DNA"/>
</dbReference>
<dbReference type="EMBL" id="BT023943">
    <property type="protein sequence ID" value="ABB36447.1"/>
    <property type="molecule type" value="mRNA"/>
</dbReference>
<dbReference type="PIR" id="B34089">
    <property type="entry name" value="B34089"/>
</dbReference>
<dbReference type="RefSeq" id="NP_788501.1">
    <property type="nucleotide sequence ID" value="NM_176323.2"/>
</dbReference>
<dbReference type="SMR" id="P18167"/>
<dbReference type="FunCoup" id="P18167">
    <property type="interactions" value="95"/>
</dbReference>
<dbReference type="IntAct" id="P18167">
    <property type="interactions" value="1"/>
</dbReference>
<dbReference type="STRING" id="7227.FBpp0075736"/>
<dbReference type="ESTHER" id="drome-est6p">
    <property type="family name" value="Carb_B_Arthropoda"/>
</dbReference>
<dbReference type="GlyCosmos" id="P18167">
    <property type="glycosylation" value="4 sites, No reported glycans"/>
</dbReference>
<dbReference type="GlyGen" id="P18167">
    <property type="glycosylation" value="4 sites"/>
</dbReference>
<dbReference type="PaxDb" id="7227-FBpp0075736"/>
<dbReference type="DNASU" id="39393"/>
<dbReference type="EnsemblMetazoa" id="FBtr0076004">
    <property type="protein sequence ID" value="FBpp0075736"/>
    <property type="gene ID" value="FBgn0000594"/>
</dbReference>
<dbReference type="GeneID" id="39393"/>
<dbReference type="KEGG" id="dme:Dmel_CG17148"/>
<dbReference type="AGR" id="FB:FBgn0000594"/>
<dbReference type="CTD" id="39393"/>
<dbReference type="FlyBase" id="FBgn0000594">
    <property type="gene designation" value="Est-P"/>
</dbReference>
<dbReference type="VEuPathDB" id="VectorBase:FBgn0000594"/>
<dbReference type="eggNOG" id="KOG1516">
    <property type="taxonomic scope" value="Eukaryota"/>
</dbReference>
<dbReference type="GeneTree" id="ENSGT00940000173305"/>
<dbReference type="HOGENOM" id="CLU_006586_13_2_1"/>
<dbReference type="InParanoid" id="P18167"/>
<dbReference type="OMA" id="RNACKNE"/>
<dbReference type="OrthoDB" id="6846267at2759"/>
<dbReference type="PhylomeDB" id="P18167"/>
<dbReference type="Reactome" id="R-DME-112311">
    <property type="pathway name" value="Neurotransmitter clearance"/>
</dbReference>
<dbReference type="Reactome" id="R-DME-1483191">
    <property type="pathway name" value="Synthesis of PC"/>
</dbReference>
<dbReference type="Reactome" id="R-DME-2022377">
    <property type="pathway name" value="Metabolism of Angiotensinogen to Angiotensins"/>
</dbReference>
<dbReference type="Reactome" id="R-DME-211945">
    <property type="pathway name" value="Phase I - Functionalization of compounds"/>
</dbReference>
<dbReference type="Reactome" id="R-DME-5578768">
    <property type="pathway name" value="Physiological factors"/>
</dbReference>
<dbReference type="Reactome" id="R-DME-9749641">
    <property type="pathway name" value="Aspirin ADME"/>
</dbReference>
<dbReference type="BioGRID-ORCS" id="39393">
    <property type="hits" value="0 hits in 1 CRISPR screen"/>
</dbReference>
<dbReference type="GenomeRNAi" id="39393"/>
<dbReference type="PRO" id="PR:P18167"/>
<dbReference type="Proteomes" id="UP000000803">
    <property type="component" value="Chromosome 3L"/>
</dbReference>
<dbReference type="Bgee" id="FBgn0000594">
    <property type="expression patterns" value="Expressed in fat body cell in dorsal vessel heart and 8 other cell types or tissues"/>
</dbReference>
<dbReference type="GO" id="GO:0005576">
    <property type="term" value="C:extracellular region"/>
    <property type="evidence" value="ECO:0007669"/>
    <property type="project" value="UniProtKB-SubCell"/>
</dbReference>
<dbReference type="GO" id="GO:0106435">
    <property type="term" value="F:carboxylesterase activity"/>
    <property type="evidence" value="ECO:0000314"/>
    <property type="project" value="FlyBase"/>
</dbReference>
<dbReference type="GO" id="GO:0017171">
    <property type="term" value="F:serine hydrolase activity"/>
    <property type="evidence" value="ECO:0007005"/>
    <property type="project" value="FlyBase"/>
</dbReference>
<dbReference type="CDD" id="cd00312">
    <property type="entry name" value="Esterase_lipase"/>
    <property type="match status" value="1"/>
</dbReference>
<dbReference type="FunFam" id="3.40.50.1820:FF:000378">
    <property type="entry name" value="Carboxylic ester hydrolase"/>
    <property type="match status" value="1"/>
</dbReference>
<dbReference type="Gene3D" id="3.40.50.1820">
    <property type="entry name" value="alpha/beta hydrolase"/>
    <property type="match status" value="1"/>
</dbReference>
<dbReference type="InterPro" id="IPR029058">
    <property type="entry name" value="AB_hydrolase_fold"/>
</dbReference>
<dbReference type="InterPro" id="IPR002018">
    <property type="entry name" value="CarbesteraseB"/>
</dbReference>
<dbReference type="InterPro" id="IPR019826">
    <property type="entry name" value="Carboxylesterase_B_AS"/>
</dbReference>
<dbReference type="InterPro" id="IPR019819">
    <property type="entry name" value="Carboxylesterase_B_CS"/>
</dbReference>
<dbReference type="PANTHER" id="PTHR43142">
    <property type="entry name" value="CARBOXYLIC ESTER HYDROLASE"/>
    <property type="match status" value="1"/>
</dbReference>
<dbReference type="PANTHER" id="PTHR43142:SF1">
    <property type="entry name" value="CARBOXYLIC ESTER HYDROLASE"/>
    <property type="match status" value="1"/>
</dbReference>
<dbReference type="Pfam" id="PF00135">
    <property type="entry name" value="COesterase"/>
    <property type="match status" value="1"/>
</dbReference>
<dbReference type="SUPFAM" id="SSF53474">
    <property type="entry name" value="alpha/beta-Hydrolases"/>
    <property type="match status" value="1"/>
</dbReference>
<dbReference type="PROSITE" id="PS00122">
    <property type="entry name" value="CARBOXYLESTERASE_B_1"/>
    <property type="match status" value="1"/>
</dbReference>
<dbReference type="PROSITE" id="PS00941">
    <property type="entry name" value="CARBOXYLESTERASE_B_2"/>
    <property type="match status" value="1"/>
</dbReference>
<reference key="1">
    <citation type="journal article" date="1990" name="Mol. Biol. Evol.">
        <title>Molecular analysis of duplicated esterase genes in Drosophila melanogaster.</title>
        <authorList>
            <person name="Collet C."/>
            <person name="Nielsen K.M."/>
            <person name="Russell R.J."/>
            <person name="Karl M."/>
            <person name="Oakeshott J.G."/>
            <person name="Richmond R.C."/>
        </authorList>
    </citation>
    <scope>NUCLEOTIDE SEQUENCE [GENOMIC DNA]</scope>
    <source>
        <strain>Canton-S</strain>
    </source>
</reference>
<reference key="2">
    <citation type="journal article" date="2000" name="Science">
        <title>The genome sequence of Drosophila melanogaster.</title>
        <authorList>
            <person name="Adams M.D."/>
            <person name="Celniker S.E."/>
            <person name="Holt R.A."/>
            <person name="Evans C.A."/>
            <person name="Gocayne J.D."/>
            <person name="Amanatides P.G."/>
            <person name="Scherer S.E."/>
            <person name="Li P.W."/>
            <person name="Hoskins R.A."/>
            <person name="Galle R.F."/>
            <person name="George R.A."/>
            <person name="Lewis S.E."/>
            <person name="Richards S."/>
            <person name="Ashburner M."/>
            <person name="Henderson S.N."/>
            <person name="Sutton G.G."/>
            <person name="Wortman J.R."/>
            <person name="Yandell M.D."/>
            <person name="Zhang Q."/>
            <person name="Chen L.X."/>
            <person name="Brandon R.C."/>
            <person name="Rogers Y.-H.C."/>
            <person name="Blazej R.G."/>
            <person name="Champe M."/>
            <person name="Pfeiffer B.D."/>
            <person name="Wan K.H."/>
            <person name="Doyle C."/>
            <person name="Baxter E.G."/>
            <person name="Helt G."/>
            <person name="Nelson C.R."/>
            <person name="Miklos G.L.G."/>
            <person name="Abril J.F."/>
            <person name="Agbayani A."/>
            <person name="An H.-J."/>
            <person name="Andrews-Pfannkoch C."/>
            <person name="Baldwin D."/>
            <person name="Ballew R.M."/>
            <person name="Basu A."/>
            <person name="Baxendale J."/>
            <person name="Bayraktaroglu L."/>
            <person name="Beasley E.M."/>
            <person name="Beeson K.Y."/>
            <person name="Benos P.V."/>
            <person name="Berman B.P."/>
            <person name="Bhandari D."/>
            <person name="Bolshakov S."/>
            <person name="Borkova D."/>
            <person name="Botchan M.R."/>
            <person name="Bouck J."/>
            <person name="Brokstein P."/>
            <person name="Brottier P."/>
            <person name="Burtis K.C."/>
            <person name="Busam D.A."/>
            <person name="Butler H."/>
            <person name="Cadieu E."/>
            <person name="Center A."/>
            <person name="Chandra I."/>
            <person name="Cherry J.M."/>
            <person name="Cawley S."/>
            <person name="Dahlke C."/>
            <person name="Davenport L.B."/>
            <person name="Davies P."/>
            <person name="de Pablos B."/>
            <person name="Delcher A."/>
            <person name="Deng Z."/>
            <person name="Mays A.D."/>
            <person name="Dew I."/>
            <person name="Dietz S.M."/>
            <person name="Dodson K."/>
            <person name="Doup L.E."/>
            <person name="Downes M."/>
            <person name="Dugan-Rocha S."/>
            <person name="Dunkov B.C."/>
            <person name="Dunn P."/>
            <person name="Durbin K.J."/>
            <person name="Evangelista C.C."/>
            <person name="Ferraz C."/>
            <person name="Ferriera S."/>
            <person name="Fleischmann W."/>
            <person name="Fosler C."/>
            <person name="Gabrielian A.E."/>
            <person name="Garg N.S."/>
            <person name="Gelbart W.M."/>
            <person name="Glasser K."/>
            <person name="Glodek A."/>
            <person name="Gong F."/>
            <person name="Gorrell J.H."/>
            <person name="Gu Z."/>
            <person name="Guan P."/>
            <person name="Harris M."/>
            <person name="Harris N.L."/>
            <person name="Harvey D.A."/>
            <person name="Heiman T.J."/>
            <person name="Hernandez J.R."/>
            <person name="Houck J."/>
            <person name="Hostin D."/>
            <person name="Houston K.A."/>
            <person name="Howland T.J."/>
            <person name="Wei M.-H."/>
            <person name="Ibegwam C."/>
            <person name="Jalali M."/>
            <person name="Kalush F."/>
            <person name="Karpen G.H."/>
            <person name="Ke Z."/>
            <person name="Kennison J.A."/>
            <person name="Ketchum K.A."/>
            <person name="Kimmel B.E."/>
            <person name="Kodira C.D."/>
            <person name="Kraft C.L."/>
            <person name="Kravitz S."/>
            <person name="Kulp D."/>
            <person name="Lai Z."/>
            <person name="Lasko P."/>
            <person name="Lei Y."/>
            <person name="Levitsky A.A."/>
            <person name="Li J.H."/>
            <person name="Li Z."/>
            <person name="Liang Y."/>
            <person name="Lin X."/>
            <person name="Liu X."/>
            <person name="Mattei B."/>
            <person name="McIntosh T.C."/>
            <person name="McLeod M.P."/>
            <person name="McPherson D."/>
            <person name="Merkulov G."/>
            <person name="Milshina N.V."/>
            <person name="Mobarry C."/>
            <person name="Morris J."/>
            <person name="Moshrefi A."/>
            <person name="Mount S.M."/>
            <person name="Moy M."/>
            <person name="Murphy B."/>
            <person name="Murphy L."/>
            <person name="Muzny D.M."/>
            <person name="Nelson D.L."/>
            <person name="Nelson D.R."/>
            <person name="Nelson K.A."/>
            <person name="Nixon K."/>
            <person name="Nusskern D.R."/>
            <person name="Pacleb J.M."/>
            <person name="Palazzolo M."/>
            <person name="Pittman G.S."/>
            <person name="Pan S."/>
            <person name="Pollard J."/>
            <person name="Puri V."/>
            <person name="Reese M.G."/>
            <person name="Reinert K."/>
            <person name="Remington K."/>
            <person name="Saunders R.D.C."/>
            <person name="Scheeler F."/>
            <person name="Shen H."/>
            <person name="Shue B.C."/>
            <person name="Siden-Kiamos I."/>
            <person name="Simpson M."/>
            <person name="Skupski M.P."/>
            <person name="Smith T.J."/>
            <person name="Spier E."/>
            <person name="Spradling A.C."/>
            <person name="Stapleton M."/>
            <person name="Strong R."/>
            <person name="Sun E."/>
            <person name="Svirskas R."/>
            <person name="Tector C."/>
            <person name="Turner R."/>
            <person name="Venter E."/>
            <person name="Wang A.H."/>
            <person name="Wang X."/>
            <person name="Wang Z.-Y."/>
            <person name="Wassarman D.A."/>
            <person name="Weinstock G.M."/>
            <person name="Weissenbach J."/>
            <person name="Williams S.M."/>
            <person name="Woodage T."/>
            <person name="Worley K.C."/>
            <person name="Wu D."/>
            <person name="Yang S."/>
            <person name="Yao Q.A."/>
            <person name="Ye J."/>
            <person name="Yeh R.-F."/>
            <person name="Zaveri J.S."/>
            <person name="Zhan M."/>
            <person name="Zhang G."/>
            <person name="Zhao Q."/>
            <person name="Zheng L."/>
            <person name="Zheng X.H."/>
            <person name="Zhong F.N."/>
            <person name="Zhong W."/>
            <person name="Zhou X."/>
            <person name="Zhu S.C."/>
            <person name="Zhu X."/>
            <person name="Smith H.O."/>
            <person name="Gibbs R.A."/>
            <person name="Myers E.W."/>
            <person name="Rubin G.M."/>
            <person name="Venter J.C."/>
        </authorList>
    </citation>
    <scope>NUCLEOTIDE SEQUENCE [LARGE SCALE GENOMIC DNA]</scope>
    <source>
        <strain>Berkeley</strain>
    </source>
</reference>
<reference key="3">
    <citation type="journal article" date="2002" name="Genome Biol.">
        <title>Annotation of the Drosophila melanogaster euchromatic genome: a systematic review.</title>
        <authorList>
            <person name="Misra S."/>
            <person name="Crosby M.A."/>
            <person name="Mungall C.J."/>
            <person name="Matthews B.B."/>
            <person name="Campbell K.S."/>
            <person name="Hradecky P."/>
            <person name="Huang Y."/>
            <person name="Kaminker J.S."/>
            <person name="Millburn G.H."/>
            <person name="Prochnik S.E."/>
            <person name="Smith C.D."/>
            <person name="Tupy J.L."/>
            <person name="Whitfield E.J."/>
            <person name="Bayraktaroglu L."/>
            <person name="Berman B.P."/>
            <person name="Bettencourt B.R."/>
            <person name="Celniker S.E."/>
            <person name="de Grey A.D.N.J."/>
            <person name="Drysdale R.A."/>
            <person name="Harris N.L."/>
            <person name="Richter J."/>
            <person name="Russo S."/>
            <person name="Schroeder A.J."/>
            <person name="Shu S.Q."/>
            <person name="Stapleton M."/>
            <person name="Yamada C."/>
            <person name="Ashburner M."/>
            <person name="Gelbart W.M."/>
            <person name="Rubin G.M."/>
            <person name="Lewis S.E."/>
        </authorList>
    </citation>
    <scope>GENOME REANNOTATION</scope>
    <source>
        <strain>Berkeley</strain>
    </source>
</reference>
<reference key="4">
    <citation type="submission" date="2005-10" db="EMBL/GenBank/DDBJ databases">
        <authorList>
            <person name="Stapleton M."/>
            <person name="Carlson J.W."/>
            <person name="Chavez C."/>
            <person name="Frise E."/>
            <person name="George R.A."/>
            <person name="Pacleb J.M."/>
            <person name="Park S."/>
            <person name="Wan K.H."/>
            <person name="Yu C."/>
            <person name="Celniker S.E."/>
        </authorList>
    </citation>
    <scope>NUCLEOTIDE SEQUENCE [LARGE SCALE MRNA]</scope>
    <source>
        <strain>Berkeley</strain>
        <tissue>Larva</tissue>
        <tissue>Pupae</tissue>
    </source>
</reference>
<gene>
    <name type="primary">Est-P</name>
    <name type="synonym">EstP</name>
    <name type="ORF">CG17148</name>
</gene>
<evidence type="ECO:0000250" key="1"/>
<evidence type="ECO:0000255" key="2"/>
<evidence type="ECO:0000255" key="3">
    <source>
        <dbReference type="PROSITE-ProRule" id="PRU10039"/>
    </source>
</evidence>
<evidence type="ECO:0000305" key="4"/>
<proteinExistence type="evidence at transcript level"/>
<protein>
    <recommendedName>
        <fullName>Esterase P</fullName>
        <shortName>Est-P</shortName>
        <ecNumber>3.1.1.1</ecNumber>
    </recommendedName>
    <alternativeName>
        <fullName>Carboxylic-ester hydrolase P</fullName>
        <shortName>Carboxylesterase-P</shortName>
    </alternativeName>
</protein>
<keyword id="KW-1015">Disulfide bond</keyword>
<keyword id="KW-0325">Glycoprotein</keyword>
<keyword id="KW-0378">Hydrolase</keyword>
<keyword id="KW-1185">Reference proteome</keyword>
<keyword id="KW-0964">Secreted</keyword>
<keyword id="KW-0719">Serine esterase</keyword>
<keyword id="KW-0732">Signal</keyword>